<name>DED1_DEBHA</name>
<feature type="chain" id="PRO_0000232158" description="ATP-dependent RNA helicase DED1">
    <location>
        <begin position="1"/>
        <end position="630"/>
    </location>
</feature>
<feature type="domain" description="Helicase ATP-binding" evidence="2">
    <location>
        <begin position="187"/>
        <end position="376"/>
    </location>
</feature>
<feature type="domain" description="Helicase C-terminal" evidence="3">
    <location>
        <begin position="387"/>
        <end position="547"/>
    </location>
</feature>
<feature type="region of interest" description="Disordered" evidence="4">
    <location>
        <begin position="1"/>
        <end position="49"/>
    </location>
</feature>
<feature type="region of interest" description="Disordered" evidence="4">
    <location>
        <begin position="78"/>
        <end position="111"/>
    </location>
</feature>
<feature type="region of interest" description="Disordered" evidence="4">
    <location>
        <begin position="554"/>
        <end position="630"/>
    </location>
</feature>
<feature type="short sequence motif" description="Q motif">
    <location>
        <begin position="156"/>
        <end position="184"/>
    </location>
</feature>
<feature type="short sequence motif" description="DEAD box">
    <location>
        <begin position="320"/>
        <end position="323"/>
    </location>
</feature>
<feature type="compositionally biased region" description="Polar residues" evidence="4">
    <location>
        <begin position="1"/>
        <end position="14"/>
    </location>
</feature>
<feature type="compositionally biased region" description="Low complexity" evidence="4">
    <location>
        <begin position="15"/>
        <end position="26"/>
    </location>
</feature>
<feature type="compositionally biased region" description="Gly residues" evidence="4">
    <location>
        <begin position="38"/>
        <end position="48"/>
    </location>
</feature>
<feature type="compositionally biased region" description="Low complexity" evidence="4">
    <location>
        <begin position="78"/>
        <end position="91"/>
    </location>
</feature>
<feature type="compositionally biased region" description="Low complexity" evidence="4">
    <location>
        <begin position="601"/>
        <end position="630"/>
    </location>
</feature>
<feature type="binding site" evidence="2">
    <location>
        <begin position="200"/>
        <end position="207"/>
    </location>
    <ligand>
        <name>ATP</name>
        <dbReference type="ChEBI" id="CHEBI:30616"/>
    </ligand>
</feature>
<keyword id="KW-0067">ATP-binding</keyword>
<keyword id="KW-0963">Cytoplasm</keyword>
<keyword id="KW-0347">Helicase</keyword>
<keyword id="KW-0378">Hydrolase</keyword>
<keyword id="KW-0396">Initiation factor</keyword>
<keyword id="KW-0547">Nucleotide-binding</keyword>
<keyword id="KW-0648">Protein biosynthesis</keyword>
<keyword id="KW-1185">Reference proteome</keyword>
<keyword id="KW-0694">RNA-binding</keyword>
<reference key="1">
    <citation type="journal article" date="2004" name="Nature">
        <title>Genome evolution in yeasts.</title>
        <authorList>
            <person name="Dujon B."/>
            <person name="Sherman D."/>
            <person name="Fischer G."/>
            <person name="Durrens P."/>
            <person name="Casaregola S."/>
            <person name="Lafontaine I."/>
            <person name="de Montigny J."/>
            <person name="Marck C."/>
            <person name="Neuveglise C."/>
            <person name="Talla E."/>
            <person name="Goffard N."/>
            <person name="Frangeul L."/>
            <person name="Aigle M."/>
            <person name="Anthouard V."/>
            <person name="Babour A."/>
            <person name="Barbe V."/>
            <person name="Barnay S."/>
            <person name="Blanchin S."/>
            <person name="Beckerich J.-M."/>
            <person name="Beyne E."/>
            <person name="Bleykasten C."/>
            <person name="Boisrame A."/>
            <person name="Boyer J."/>
            <person name="Cattolico L."/>
            <person name="Confanioleri F."/>
            <person name="de Daruvar A."/>
            <person name="Despons L."/>
            <person name="Fabre E."/>
            <person name="Fairhead C."/>
            <person name="Ferry-Dumazet H."/>
            <person name="Groppi A."/>
            <person name="Hantraye F."/>
            <person name="Hennequin C."/>
            <person name="Jauniaux N."/>
            <person name="Joyet P."/>
            <person name="Kachouri R."/>
            <person name="Kerrest A."/>
            <person name="Koszul R."/>
            <person name="Lemaire M."/>
            <person name="Lesur I."/>
            <person name="Ma L."/>
            <person name="Muller H."/>
            <person name="Nicaud J.-M."/>
            <person name="Nikolski M."/>
            <person name="Oztas S."/>
            <person name="Ozier-Kalogeropoulos O."/>
            <person name="Pellenz S."/>
            <person name="Potier S."/>
            <person name="Richard G.-F."/>
            <person name="Straub M.-L."/>
            <person name="Suleau A."/>
            <person name="Swennen D."/>
            <person name="Tekaia F."/>
            <person name="Wesolowski-Louvel M."/>
            <person name="Westhof E."/>
            <person name="Wirth B."/>
            <person name="Zeniou-Meyer M."/>
            <person name="Zivanovic Y."/>
            <person name="Bolotin-Fukuhara M."/>
            <person name="Thierry A."/>
            <person name="Bouchier C."/>
            <person name="Caudron B."/>
            <person name="Scarpelli C."/>
            <person name="Gaillardin C."/>
            <person name="Weissenbach J."/>
            <person name="Wincker P."/>
            <person name="Souciet J.-L."/>
        </authorList>
    </citation>
    <scope>NUCLEOTIDE SEQUENCE [LARGE SCALE GENOMIC DNA]</scope>
    <source>
        <strain>ATCC 36239 / CBS 767 / BCRC 21394 / JCM 1990 / NBRC 0083 / IGC 2968</strain>
    </source>
</reference>
<sequence>MADITQQMNNLSVEQGSQGNGSSRSQYVPPHLRNRPSGGNGSFGGNRRGGFNNNSFGGFDNNRRGGYNNNSFGGYNNNRRGGFNNARGSGRYNTPKPGVGRWVDGKHEPAEKNERLEKELYGIDEEPTTQSSGINFDNYDDIPVEASGEGVPEPITAFTAPPLDPLLVENVKLSRFTKPTPVQKYSVPIVAAGRDLMACAQTGSGKTGGFLFPVLSESYMNGPAEVPETAGAFSSHKVYPTALVMAPTRELVSQIFDEAKKFAYRSWVRPSVVYGGADIGGQIRNLERGCDLLVATPGRLKDLLERGRVSLASIKYLVLDEADRMLDMGFEPQIRHIVQECDMPGVEDRQTLMFSATFPKEIQFLARDFLKEYIFLSVGRVGSTSENITQKILYVEDEEKKSVLLDLLSANDNGLTIIFTETKRMADNLADFLYDQGFPATAIHGDRSQYEREKALAAFKTGTAPILVATAVAARGLDIPNVSHIVNYDLPSDIDDYVHRIGRTGRAGNIGIATAFFNRNNKNIVKGLVDLLTEANQEIPDFLNKIARESAFGGKSMRGGSSRGGRGGATRDFRKQGGSYGGGASSSNWGGSSSSGGGWGSSNNGGYSGYSGRSNGSSSYGNPSASNSWW</sequence>
<comment type="function">
    <text evidence="1">ATP-binding RNA helicase involved in translation initiation. Remodels RNA in response to ADP and ATP concentrations by facilitating disruption, but also formation of RNA duplexes (By similarity).</text>
</comment>
<comment type="catalytic activity">
    <reaction>
        <text>ATP + H2O = ADP + phosphate + H(+)</text>
        <dbReference type="Rhea" id="RHEA:13065"/>
        <dbReference type="ChEBI" id="CHEBI:15377"/>
        <dbReference type="ChEBI" id="CHEBI:15378"/>
        <dbReference type="ChEBI" id="CHEBI:30616"/>
        <dbReference type="ChEBI" id="CHEBI:43474"/>
        <dbReference type="ChEBI" id="CHEBI:456216"/>
        <dbReference type="EC" id="3.6.4.13"/>
    </reaction>
</comment>
<comment type="subcellular location">
    <subcellularLocation>
        <location evidence="1">Cytoplasm</location>
    </subcellularLocation>
</comment>
<comment type="domain">
    <text>The Q motif is unique to and characteristic of the DEAD box family of RNA helicases and controls ATP binding and hydrolysis.</text>
</comment>
<comment type="similarity">
    <text evidence="5">Belongs to the DEAD box helicase family. DDX3/DED1 subfamily.</text>
</comment>
<proteinExistence type="inferred from homology"/>
<organism>
    <name type="scientific">Debaryomyces hansenii (strain ATCC 36239 / CBS 767 / BCRC 21394 / JCM 1990 / NBRC 0083 / IGC 2968)</name>
    <name type="common">Yeast</name>
    <name type="synonym">Torulaspora hansenii</name>
    <dbReference type="NCBI Taxonomy" id="284592"/>
    <lineage>
        <taxon>Eukaryota</taxon>
        <taxon>Fungi</taxon>
        <taxon>Dikarya</taxon>
        <taxon>Ascomycota</taxon>
        <taxon>Saccharomycotina</taxon>
        <taxon>Pichiomycetes</taxon>
        <taxon>Debaryomycetaceae</taxon>
        <taxon>Debaryomyces</taxon>
    </lineage>
</organism>
<evidence type="ECO:0000250" key="1"/>
<evidence type="ECO:0000255" key="2">
    <source>
        <dbReference type="PROSITE-ProRule" id="PRU00541"/>
    </source>
</evidence>
<evidence type="ECO:0000255" key="3">
    <source>
        <dbReference type="PROSITE-ProRule" id="PRU00542"/>
    </source>
</evidence>
<evidence type="ECO:0000256" key="4">
    <source>
        <dbReference type="SAM" id="MobiDB-lite"/>
    </source>
</evidence>
<evidence type="ECO:0000305" key="5"/>
<gene>
    <name type="primary">DED1</name>
    <name type="ordered locus">DEHA2C13486g</name>
</gene>
<protein>
    <recommendedName>
        <fullName>ATP-dependent RNA helicase DED1</fullName>
        <ecNumber>3.6.4.13</ecNumber>
    </recommendedName>
</protein>
<dbReference type="EC" id="3.6.4.13"/>
<dbReference type="EMBL" id="CR382135">
    <property type="protein sequence ID" value="CAG86342.1"/>
    <property type="molecule type" value="Genomic_DNA"/>
</dbReference>
<dbReference type="RefSeq" id="XP_458265.1">
    <property type="nucleotide sequence ID" value="XM_458265.1"/>
</dbReference>
<dbReference type="SMR" id="Q6BU54"/>
<dbReference type="FunCoup" id="Q6BU54">
    <property type="interactions" value="1429"/>
</dbReference>
<dbReference type="STRING" id="284592.Q6BU54"/>
<dbReference type="GeneID" id="2900844"/>
<dbReference type="KEGG" id="dha:DEHA2C13486g"/>
<dbReference type="VEuPathDB" id="FungiDB:DEHA2C13486g"/>
<dbReference type="eggNOG" id="KOG0335">
    <property type="taxonomic scope" value="Eukaryota"/>
</dbReference>
<dbReference type="HOGENOM" id="CLU_003041_16_3_1"/>
<dbReference type="InParanoid" id="Q6BU54"/>
<dbReference type="OMA" id="CYRSWVR"/>
<dbReference type="OrthoDB" id="196131at2759"/>
<dbReference type="Proteomes" id="UP000000599">
    <property type="component" value="Chromosome C"/>
</dbReference>
<dbReference type="GO" id="GO:0010494">
    <property type="term" value="C:cytoplasmic stress granule"/>
    <property type="evidence" value="ECO:0007669"/>
    <property type="project" value="EnsemblFungi"/>
</dbReference>
<dbReference type="GO" id="GO:0005681">
    <property type="term" value="C:spliceosomal complex"/>
    <property type="evidence" value="ECO:0007669"/>
    <property type="project" value="EnsemblFungi"/>
</dbReference>
<dbReference type="GO" id="GO:0005524">
    <property type="term" value="F:ATP binding"/>
    <property type="evidence" value="ECO:0007669"/>
    <property type="project" value="UniProtKB-KW"/>
</dbReference>
<dbReference type="GO" id="GO:0016887">
    <property type="term" value="F:ATP hydrolysis activity"/>
    <property type="evidence" value="ECO:0007669"/>
    <property type="project" value="RHEA"/>
</dbReference>
<dbReference type="GO" id="GO:0031370">
    <property type="term" value="F:eukaryotic initiation factor 4G binding"/>
    <property type="evidence" value="ECO:0007669"/>
    <property type="project" value="EnsemblFungi"/>
</dbReference>
<dbReference type="GO" id="GO:0051880">
    <property type="term" value="F:G-quadruplex DNA binding"/>
    <property type="evidence" value="ECO:0007669"/>
    <property type="project" value="EnsemblFungi"/>
</dbReference>
<dbReference type="GO" id="GO:0002151">
    <property type="term" value="F:G-quadruplex RNA binding"/>
    <property type="evidence" value="ECO:0007669"/>
    <property type="project" value="EnsemblFungi"/>
</dbReference>
<dbReference type="GO" id="GO:0003729">
    <property type="term" value="F:mRNA binding"/>
    <property type="evidence" value="ECO:0007669"/>
    <property type="project" value="EnsemblFungi"/>
</dbReference>
<dbReference type="GO" id="GO:0003724">
    <property type="term" value="F:RNA helicase activity"/>
    <property type="evidence" value="ECO:0007669"/>
    <property type="project" value="UniProtKB-EC"/>
</dbReference>
<dbReference type="GO" id="GO:0033592">
    <property type="term" value="F:RNA strand annealing activity"/>
    <property type="evidence" value="ECO:0007669"/>
    <property type="project" value="EnsemblFungi"/>
</dbReference>
<dbReference type="GO" id="GO:0003743">
    <property type="term" value="F:translation initiation factor activity"/>
    <property type="evidence" value="ECO:0007669"/>
    <property type="project" value="UniProtKB-KW"/>
</dbReference>
<dbReference type="GO" id="GO:0002183">
    <property type="term" value="P:cytoplasmic translational initiation"/>
    <property type="evidence" value="ECO:0007669"/>
    <property type="project" value="EnsemblFungi"/>
</dbReference>
<dbReference type="GO" id="GO:1990625">
    <property type="term" value="P:negative regulation of cytoplasmic translational initiation in response to stress"/>
    <property type="evidence" value="ECO:0007669"/>
    <property type="project" value="EnsemblFungi"/>
</dbReference>
<dbReference type="GO" id="GO:1901195">
    <property type="term" value="P:positive regulation of formation of translation preinitiation complex"/>
    <property type="evidence" value="ECO:0007669"/>
    <property type="project" value="EnsemblFungi"/>
</dbReference>
<dbReference type="GO" id="GO:0031047">
    <property type="term" value="P:regulatory ncRNA-mediated gene silencing"/>
    <property type="evidence" value="ECO:0007669"/>
    <property type="project" value="EnsemblFungi"/>
</dbReference>
<dbReference type="GO" id="GO:0000390">
    <property type="term" value="P:spliceosomal complex disassembly"/>
    <property type="evidence" value="ECO:0007669"/>
    <property type="project" value="EnsemblFungi"/>
</dbReference>
<dbReference type="CDD" id="cd17967">
    <property type="entry name" value="DEADc_DDX3_DDX4"/>
    <property type="match status" value="1"/>
</dbReference>
<dbReference type="CDD" id="cd18787">
    <property type="entry name" value="SF2_C_DEAD"/>
    <property type="match status" value="1"/>
</dbReference>
<dbReference type="FunFam" id="3.40.50.300:FF:000160">
    <property type="entry name" value="ATP-dependent RNA helicase DDX3X"/>
    <property type="match status" value="1"/>
</dbReference>
<dbReference type="FunFam" id="3.40.50.300:FF:000008">
    <property type="entry name" value="ATP-dependent RNA helicase RhlB"/>
    <property type="match status" value="1"/>
</dbReference>
<dbReference type="Gene3D" id="3.40.50.300">
    <property type="entry name" value="P-loop containing nucleotide triphosphate hydrolases"/>
    <property type="match status" value="2"/>
</dbReference>
<dbReference type="InterPro" id="IPR011545">
    <property type="entry name" value="DEAD/DEAH_box_helicase_dom"/>
</dbReference>
<dbReference type="InterPro" id="IPR044763">
    <property type="entry name" value="Ded1/Dbp1_DEADc"/>
</dbReference>
<dbReference type="InterPro" id="IPR014001">
    <property type="entry name" value="Helicase_ATP-bd"/>
</dbReference>
<dbReference type="InterPro" id="IPR001650">
    <property type="entry name" value="Helicase_C-like"/>
</dbReference>
<dbReference type="InterPro" id="IPR027417">
    <property type="entry name" value="P-loop_NTPase"/>
</dbReference>
<dbReference type="InterPro" id="IPR000629">
    <property type="entry name" value="RNA-helicase_DEAD-box_CS"/>
</dbReference>
<dbReference type="InterPro" id="IPR014014">
    <property type="entry name" value="RNA_helicase_DEAD_Q_motif"/>
</dbReference>
<dbReference type="PANTHER" id="PTHR47958">
    <property type="entry name" value="ATP-DEPENDENT RNA HELICASE DBP3"/>
    <property type="match status" value="1"/>
</dbReference>
<dbReference type="Pfam" id="PF00270">
    <property type="entry name" value="DEAD"/>
    <property type="match status" value="1"/>
</dbReference>
<dbReference type="Pfam" id="PF00271">
    <property type="entry name" value="Helicase_C"/>
    <property type="match status" value="1"/>
</dbReference>
<dbReference type="SMART" id="SM00487">
    <property type="entry name" value="DEXDc"/>
    <property type="match status" value="1"/>
</dbReference>
<dbReference type="SMART" id="SM00490">
    <property type="entry name" value="HELICc"/>
    <property type="match status" value="1"/>
</dbReference>
<dbReference type="SUPFAM" id="SSF52540">
    <property type="entry name" value="P-loop containing nucleoside triphosphate hydrolases"/>
    <property type="match status" value="1"/>
</dbReference>
<dbReference type="PROSITE" id="PS00039">
    <property type="entry name" value="DEAD_ATP_HELICASE"/>
    <property type="match status" value="1"/>
</dbReference>
<dbReference type="PROSITE" id="PS51192">
    <property type="entry name" value="HELICASE_ATP_BIND_1"/>
    <property type="match status" value="1"/>
</dbReference>
<dbReference type="PROSITE" id="PS51194">
    <property type="entry name" value="HELICASE_CTER"/>
    <property type="match status" value="1"/>
</dbReference>
<dbReference type="PROSITE" id="PS51195">
    <property type="entry name" value="Q_MOTIF"/>
    <property type="match status" value="1"/>
</dbReference>
<accession>Q6BU54</accession>